<sequence>MNNDNIAQLIADFPLIEKMVELKEVSWFNPNITSLQEGLPYVGLDNNNIQDASDRLARFAPYMVKAFPETAITNGIIESDVVEISAMKSQLEQQYEVEIQGKLLLKKDSHLPISGSIKARGGIYEVLTHAEQLAIKAEVLELSDDYSKLFTEEFKSFFSQYSIAVGSTGNLGMSIGIMSAKLGFSVSVHMSADARQWKKEKLRAHGVNVVEYNEDYSVAVEQGRQEAENDPKCFFIDDENSQTLFLGYSVAGERLKQQFDAMHIVVDENNPLFVYLPCGVGGGPGGVAFGLKMAFGDNVHCIFAEPTHSPCMLLGILTGLHDGIAVQDIGIDNITAADGLAVGRASGFVGRAMERLLDGFYTISDQRMYDLLGLLNKVEGIQLEPSALAGMLGPIVVTNNDEYLKRINMSNEKLVNATHLIWATGGGMVPAIEMEKYLSKAGS</sequence>
<reference key="1">
    <citation type="journal article" date="2005" name="Proc. Natl. Acad. Sci. U.S.A.">
        <title>The psychrophilic lifestyle as revealed by the genome sequence of Colwellia psychrerythraea 34H through genomic and proteomic analyses.</title>
        <authorList>
            <person name="Methe B.A."/>
            <person name="Nelson K.E."/>
            <person name="Deming J.W."/>
            <person name="Momen B."/>
            <person name="Melamud E."/>
            <person name="Zhang X."/>
            <person name="Moult J."/>
            <person name="Madupu R."/>
            <person name="Nelson W.C."/>
            <person name="Dodson R.J."/>
            <person name="Brinkac L.M."/>
            <person name="Daugherty S.C."/>
            <person name="Durkin A.S."/>
            <person name="DeBoy R.T."/>
            <person name="Kolonay J.F."/>
            <person name="Sullivan S.A."/>
            <person name="Zhou L."/>
            <person name="Davidsen T.M."/>
            <person name="Wu M."/>
            <person name="Huston A.L."/>
            <person name="Lewis M."/>
            <person name="Weaver B."/>
            <person name="Weidman J.F."/>
            <person name="Khouri H."/>
            <person name="Utterback T.R."/>
            <person name="Feldblyum T.V."/>
            <person name="Fraser C.M."/>
        </authorList>
    </citation>
    <scope>NUCLEOTIDE SEQUENCE [LARGE SCALE GENOMIC DNA]</scope>
    <source>
        <strain>34H / ATCC BAA-681</strain>
    </source>
</reference>
<comment type="catalytic activity">
    <reaction evidence="1">
        <text>D-serine = pyruvate + NH4(+)</text>
        <dbReference type="Rhea" id="RHEA:13977"/>
        <dbReference type="ChEBI" id="CHEBI:15361"/>
        <dbReference type="ChEBI" id="CHEBI:28938"/>
        <dbReference type="ChEBI" id="CHEBI:35247"/>
        <dbReference type="EC" id="4.3.1.18"/>
    </reaction>
</comment>
<comment type="cofactor">
    <cofactor evidence="1">
        <name>pyridoxal 5'-phosphate</name>
        <dbReference type="ChEBI" id="CHEBI:597326"/>
    </cofactor>
</comment>
<comment type="similarity">
    <text evidence="1">Belongs to the serine/threonine dehydratase family. DsdA subfamily.</text>
</comment>
<dbReference type="EC" id="4.3.1.18" evidence="1"/>
<dbReference type="EMBL" id="CP000083">
    <property type="protein sequence ID" value="AAZ26608.1"/>
    <property type="molecule type" value="Genomic_DNA"/>
</dbReference>
<dbReference type="RefSeq" id="WP_011045384.1">
    <property type="nucleotide sequence ID" value="NC_003910.7"/>
</dbReference>
<dbReference type="SMR" id="Q47V69"/>
<dbReference type="STRING" id="167879.CPS_4659"/>
<dbReference type="KEGG" id="cps:CPS_4659"/>
<dbReference type="HOGENOM" id="CLU_035707_0_0_6"/>
<dbReference type="Proteomes" id="UP000000547">
    <property type="component" value="Chromosome"/>
</dbReference>
<dbReference type="GO" id="GO:0008721">
    <property type="term" value="F:D-serine ammonia-lyase activity"/>
    <property type="evidence" value="ECO:0007669"/>
    <property type="project" value="UniProtKB-EC"/>
</dbReference>
<dbReference type="GO" id="GO:0016836">
    <property type="term" value="F:hydro-lyase activity"/>
    <property type="evidence" value="ECO:0007669"/>
    <property type="project" value="UniProtKB-UniRule"/>
</dbReference>
<dbReference type="GO" id="GO:0030170">
    <property type="term" value="F:pyridoxal phosphate binding"/>
    <property type="evidence" value="ECO:0007669"/>
    <property type="project" value="InterPro"/>
</dbReference>
<dbReference type="GO" id="GO:0036088">
    <property type="term" value="P:D-serine catabolic process"/>
    <property type="evidence" value="ECO:0007669"/>
    <property type="project" value="TreeGrafter"/>
</dbReference>
<dbReference type="GO" id="GO:0009097">
    <property type="term" value="P:isoleucine biosynthetic process"/>
    <property type="evidence" value="ECO:0007669"/>
    <property type="project" value="TreeGrafter"/>
</dbReference>
<dbReference type="FunFam" id="3.40.50.1100:FF:000018">
    <property type="entry name" value="D-serine dehydratase"/>
    <property type="match status" value="1"/>
</dbReference>
<dbReference type="Gene3D" id="3.40.50.1100">
    <property type="match status" value="2"/>
</dbReference>
<dbReference type="HAMAP" id="MF_01030">
    <property type="entry name" value="D_Ser_dehydrat"/>
    <property type="match status" value="1"/>
</dbReference>
<dbReference type="InterPro" id="IPR011780">
    <property type="entry name" value="D_Ser_am_lyase"/>
</dbReference>
<dbReference type="InterPro" id="IPR050147">
    <property type="entry name" value="Ser/Thr_Dehydratase"/>
</dbReference>
<dbReference type="InterPro" id="IPR000634">
    <property type="entry name" value="Ser/Thr_deHydtase_PyrdxlP-BS"/>
</dbReference>
<dbReference type="InterPro" id="IPR001926">
    <property type="entry name" value="TrpB-like_PALP"/>
</dbReference>
<dbReference type="InterPro" id="IPR036052">
    <property type="entry name" value="TrpB-like_PALP_sf"/>
</dbReference>
<dbReference type="NCBIfam" id="TIGR02035">
    <property type="entry name" value="D_Ser_am_lyase"/>
    <property type="match status" value="1"/>
</dbReference>
<dbReference type="NCBIfam" id="NF002823">
    <property type="entry name" value="PRK02991.1"/>
    <property type="match status" value="1"/>
</dbReference>
<dbReference type="PANTHER" id="PTHR48078:SF9">
    <property type="entry name" value="D-SERINE DEHYDRATASE"/>
    <property type="match status" value="1"/>
</dbReference>
<dbReference type="PANTHER" id="PTHR48078">
    <property type="entry name" value="THREONINE DEHYDRATASE, MITOCHONDRIAL-RELATED"/>
    <property type="match status" value="1"/>
</dbReference>
<dbReference type="Pfam" id="PF00291">
    <property type="entry name" value="PALP"/>
    <property type="match status" value="1"/>
</dbReference>
<dbReference type="SUPFAM" id="SSF53686">
    <property type="entry name" value="Tryptophan synthase beta subunit-like PLP-dependent enzymes"/>
    <property type="match status" value="1"/>
</dbReference>
<dbReference type="PROSITE" id="PS00165">
    <property type="entry name" value="DEHYDRATASE_SER_THR"/>
    <property type="match status" value="1"/>
</dbReference>
<evidence type="ECO:0000255" key="1">
    <source>
        <dbReference type="HAMAP-Rule" id="MF_01030"/>
    </source>
</evidence>
<organism>
    <name type="scientific">Colwellia psychrerythraea (strain 34H / ATCC BAA-681)</name>
    <name type="common">Vibrio psychroerythus</name>
    <dbReference type="NCBI Taxonomy" id="167879"/>
    <lineage>
        <taxon>Bacteria</taxon>
        <taxon>Pseudomonadati</taxon>
        <taxon>Pseudomonadota</taxon>
        <taxon>Gammaproteobacteria</taxon>
        <taxon>Alteromonadales</taxon>
        <taxon>Colwelliaceae</taxon>
        <taxon>Colwellia</taxon>
    </lineage>
</organism>
<proteinExistence type="inferred from homology"/>
<accession>Q47V69</accession>
<protein>
    <recommendedName>
        <fullName evidence="1">Probable D-serine dehydratase</fullName>
        <ecNumber evidence="1">4.3.1.18</ecNumber>
    </recommendedName>
    <alternativeName>
        <fullName evidence="1">D-serine deaminase</fullName>
        <shortName evidence="1">DSD</shortName>
    </alternativeName>
</protein>
<feature type="chain" id="PRO_0000291724" description="Probable D-serine dehydratase">
    <location>
        <begin position="1"/>
        <end position="443"/>
    </location>
</feature>
<feature type="modified residue" description="N6-(pyridoxal phosphate)lysine" evidence="1">
    <location>
        <position position="118"/>
    </location>
</feature>
<keyword id="KW-0456">Lyase</keyword>
<keyword id="KW-0663">Pyridoxal phosphate</keyword>
<name>SDHD_COLP3</name>
<gene>
    <name evidence="1" type="primary">dsdA</name>
    <name type="ordered locus">CPS_4659</name>
</gene>